<proteinExistence type="evidence at protein level"/>
<gene>
    <name type="primary">Rsrc1</name>
    <name type="synonym">Srrp53</name>
</gene>
<evidence type="ECO:0000250" key="1"/>
<evidence type="ECO:0000255" key="2"/>
<evidence type="ECO:0000256" key="3">
    <source>
        <dbReference type="SAM" id="MobiDB-lite"/>
    </source>
</evidence>
<evidence type="ECO:0000269" key="4">
    <source>
    </source>
</evidence>
<sequence length="334" mass="38637">MGRRSSDTEEESRSKRKKKHRRRSSSSSSSDSRTYSRKKGGRRPRSDSRSWSRDRQLRSHSYERRRRRRSSSSSSYGSRRKRSRSRSRGRGKPYRVQRSRSKSRTRRSRSRPRPRSHSRSSERSSHRRTRSRSRDRDRRKVRDKEKREKEKDKGKDKEVHSIKRGDSGNIKAGLEHLPPAEQAKARLQLVLEAAAKADEALKAKERSEEEAKRRKEEDQATLVEQVKRVKEIEAIESDSFVQQTFRSSKDVKKAVEPSEVQHVTAASGPASAAAEPPSTGKEIDPDSIPTAIKYQDDNSLAHPNLFIEKAEAEEKWFKRLIALRQERLMGSPVA</sequence>
<feature type="chain" id="PRO_0000097497" description="Serine/Arginine-related protein 53">
    <location>
        <begin position="1"/>
        <end position="334"/>
    </location>
</feature>
<feature type="region of interest" description="Disordered" evidence="3">
    <location>
        <begin position="1"/>
        <end position="179"/>
    </location>
</feature>
<feature type="region of interest" description="Disordered" evidence="3">
    <location>
        <begin position="198"/>
        <end position="220"/>
    </location>
</feature>
<feature type="region of interest" description="Disordered" evidence="3">
    <location>
        <begin position="246"/>
        <end position="290"/>
    </location>
</feature>
<feature type="coiled-coil region" evidence="2">
    <location>
        <begin position="180"/>
        <end position="236"/>
    </location>
</feature>
<feature type="compositionally biased region" description="Basic and acidic residues" evidence="3">
    <location>
        <begin position="1"/>
        <end position="13"/>
    </location>
</feature>
<feature type="compositionally biased region" description="Basic residues" evidence="3">
    <location>
        <begin position="14"/>
        <end position="24"/>
    </location>
</feature>
<feature type="compositionally biased region" description="Basic and acidic residues" evidence="3">
    <location>
        <begin position="44"/>
        <end position="62"/>
    </location>
</feature>
<feature type="compositionally biased region" description="Basic residues" evidence="3">
    <location>
        <begin position="78"/>
        <end position="118"/>
    </location>
</feature>
<feature type="compositionally biased region" description="Basic and acidic residues" evidence="3">
    <location>
        <begin position="132"/>
        <end position="166"/>
    </location>
</feature>
<feature type="compositionally biased region" description="Basic and acidic residues" evidence="3">
    <location>
        <begin position="198"/>
        <end position="218"/>
    </location>
</feature>
<feature type="compositionally biased region" description="Basic and acidic residues" evidence="3">
    <location>
        <begin position="247"/>
        <end position="256"/>
    </location>
</feature>
<feature type="compositionally biased region" description="Low complexity" evidence="3">
    <location>
        <begin position="265"/>
        <end position="278"/>
    </location>
</feature>
<keyword id="KW-0175">Coiled coil</keyword>
<keyword id="KW-0963">Cytoplasm</keyword>
<keyword id="KW-0507">mRNA processing</keyword>
<keyword id="KW-0508">mRNA splicing</keyword>
<keyword id="KW-0539">Nucleus</keyword>
<keyword id="KW-0597">Phosphoprotein</keyword>
<keyword id="KW-1185">Reference proteome</keyword>
<name>RSRC1_MOUSE</name>
<protein>
    <recommendedName>
        <fullName>Serine/Arginine-related protein 53</fullName>
        <shortName>SRrp53</shortName>
    </recommendedName>
    <alternativeName>
        <fullName>Arginine/serine-rich coiled-coil protein 1</fullName>
    </alternativeName>
</protein>
<accession>Q9DBU6</accession>
<accession>Q3TF06</accession>
<dbReference type="EMBL" id="AK004742">
    <property type="protein sequence ID" value="BAB23523.1"/>
    <property type="molecule type" value="mRNA"/>
</dbReference>
<dbReference type="EMBL" id="AK169340">
    <property type="protein sequence ID" value="BAE41092.1"/>
    <property type="molecule type" value="mRNA"/>
</dbReference>
<dbReference type="EMBL" id="BC083123">
    <property type="protein sequence ID" value="AAH83123.1"/>
    <property type="molecule type" value="mRNA"/>
</dbReference>
<dbReference type="CCDS" id="CCDS17394.1"/>
<dbReference type="RefSeq" id="NP_080098.1">
    <property type="nucleotide sequence ID" value="NM_025822.5"/>
</dbReference>
<dbReference type="SMR" id="Q9DBU6"/>
<dbReference type="BioGRID" id="211784">
    <property type="interactions" value="6"/>
</dbReference>
<dbReference type="FunCoup" id="Q9DBU6">
    <property type="interactions" value="2810"/>
</dbReference>
<dbReference type="STRING" id="10090.ENSMUSP00000066797"/>
<dbReference type="iPTMnet" id="Q9DBU6"/>
<dbReference type="PhosphoSitePlus" id="Q9DBU6"/>
<dbReference type="PaxDb" id="10090-ENSMUSP00000066797"/>
<dbReference type="ProteomicsDB" id="256790"/>
<dbReference type="Pumba" id="Q9DBU6"/>
<dbReference type="Antibodypedia" id="46770">
    <property type="antibodies" value="76 antibodies from 23 providers"/>
</dbReference>
<dbReference type="DNASU" id="66880"/>
<dbReference type="Ensembl" id="ENSMUST00000065074.14">
    <property type="protein sequence ID" value="ENSMUSP00000066797.8"/>
    <property type="gene ID" value="ENSMUSG00000034544.18"/>
</dbReference>
<dbReference type="Ensembl" id="ENSMUST00000161726.2">
    <property type="protein sequence ID" value="ENSMUSP00000124347.2"/>
    <property type="gene ID" value="ENSMUSG00000034544.18"/>
</dbReference>
<dbReference type="Ensembl" id="ENSMUST00000162036.8">
    <property type="protein sequence ID" value="ENSMUSP00000125468.2"/>
    <property type="gene ID" value="ENSMUSG00000034544.18"/>
</dbReference>
<dbReference type="GeneID" id="66880"/>
<dbReference type="KEGG" id="mmu:66880"/>
<dbReference type="UCSC" id="uc008plh.1">
    <property type="organism name" value="mouse"/>
</dbReference>
<dbReference type="AGR" id="MGI:1914130"/>
<dbReference type="CTD" id="51319"/>
<dbReference type="MGI" id="MGI:1914130">
    <property type="gene designation" value="Rsrc1"/>
</dbReference>
<dbReference type="VEuPathDB" id="HostDB:ENSMUSG00000034544"/>
<dbReference type="eggNOG" id="KOG3406">
    <property type="taxonomic scope" value="Eukaryota"/>
</dbReference>
<dbReference type="GeneTree" id="ENSGT00730000111251"/>
<dbReference type="InParanoid" id="Q9DBU6"/>
<dbReference type="OMA" id="NYRQKYM"/>
<dbReference type="OrthoDB" id="9946564at2759"/>
<dbReference type="BioGRID-ORCS" id="66880">
    <property type="hits" value="2 hits in 79 CRISPR screens"/>
</dbReference>
<dbReference type="ChiTaRS" id="Rsrc1">
    <property type="organism name" value="mouse"/>
</dbReference>
<dbReference type="PRO" id="PR:Q9DBU6"/>
<dbReference type="Proteomes" id="UP000000589">
    <property type="component" value="Chromosome 3"/>
</dbReference>
<dbReference type="RNAct" id="Q9DBU6">
    <property type="molecule type" value="protein"/>
</dbReference>
<dbReference type="Bgee" id="ENSMUSG00000034544">
    <property type="expression patterns" value="Expressed in medial geniculate body and 257 other cell types or tissues"/>
</dbReference>
<dbReference type="ExpressionAtlas" id="Q9DBU6">
    <property type="expression patterns" value="baseline and differential"/>
</dbReference>
<dbReference type="GO" id="GO:0005737">
    <property type="term" value="C:cytoplasm"/>
    <property type="evidence" value="ECO:0000314"/>
    <property type="project" value="UniProtKB"/>
</dbReference>
<dbReference type="GO" id="GO:0016607">
    <property type="term" value="C:nuclear speck"/>
    <property type="evidence" value="ECO:0000314"/>
    <property type="project" value="UniProtKB"/>
</dbReference>
<dbReference type="GO" id="GO:0005634">
    <property type="term" value="C:nucleus"/>
    <property type="evidence" value="ECO:0000314"/>
    <property type="project" value="UniProtKB"/>
</dbReference>
<dbReference type="GO" id="GO:0000380">
    <property type="term" value="P:alternative mRNA splicing, via spliceosome"/>
    <property type="evidence" value="ECO:0000314"/>
    <property type="project" value="MGI"/>
</dbReference>
<dbReference type="GO" id="GO:0006913">
    <property type="term" value="P:nucleocytoplasmic transport"/>
    <property type="evidence" value="ECO:0000314"/>
    <property type="project" value="UniProtKB"/>
</dbReference>
<dbReference type="GO" id="GO:0046677">
    <property type="term" value="P:response to antibiotic"/>
    <property type="evidence" value="ECO:0000314"/>
    <property type="project" value="MGI"/>
</dbReference>
<dbReference type="GO" id="GO:0008380">
    <property type="term" value="P:RNA splicing"/>
    <property type="evidence" value="ECO:0000266"/>
    <property type="project" value="MGI"/>
</dbReference>
<dbReference type="InterPro" id="IPR034604">
    <property type="entry name" value="SRRP53"/>
</dbReference>
<dbReference type="PANTHER" id="PTHR31968">
    <property type="entry name" value="SERINE/ARGININE-RELATED PROTEIN 53"/>
    <property type="match status" value="1"/>
</dbReference>
<dbReference type="PANTHER" id="PTHR31968:SF4">
    <property type="entry name" value="SERINE_ARGININE-RELATED PROTEIN 53"/>
    <property type="match status" value="1"/>
</dbReference>
<comment type="function">
    <text evidence="1">Plays a role in pre-mRNA splicing. Involved in both constitutive and alternative pre-mRNA splicing. May have a role in the recognition of the 3' splice site during the second step of splicing (By similarity).</text>
</comment>
<comment type="subunit">
    <text evidence="1">Interacts (via Arg/Ser-rich domain) with LUC7L3, RBM39 and RSF1.</text>
</comment>
<comment type="subcellular location">
    <subcellularLocation>
        <location evidence="4">Nucleus</location>
    </subcellularLocation>
    <subcellularLocation>
        <location evidence="4">Nucleus speckle</location>
    </subcellularLocation>
    <subcellularLocation>
        <location evidence="4">Cytoplasm</location>
    </subcellularLocation>
    <text>Shuttles between the nucleus and cytoplasm.</text>
</comment>
<comment type="PTM">
    <text evidence="4">Phosphorylated.</text>
</comment>
<reference key="1">
    <citation type="journal article" date="2005" name="Science">
        <title>The transcriptional landscape of the mammalian genome.</title>
        <authorList>
            <person name="Carninci P."/>
            <person name="Kasukawa T."/>
            <person name="Katayama S."/>
            <person name="Gough J."/>
            <person name="Frith M.C."/>
            <person name="Maeda N."/>
            <person name="Oyama R."/>
            <person name="Ravasi T."/>
            <person name="Lenhard B."/>
            <person name="Wells C."/>
            <person name="Kodzius R."/>
            <person name="Shimokawa K."/>
            <person name="Bajic V.B."/>
            <person name="Brenner S.E."/>
            <person name="Batalov S."/>
            <person name="Forrest A.R."/>
            <person name="Zavolan M."/>
            <person name="Davis M.J."/>
            <person name="Wilming L.G."/>
            <person name="Aidinis V."/>
            <person name="Allen J.E."/>
            <person name="Ambesi-Impiombato A."/>
            <person name="Apweiler R."/>
            <person name="Aturaliya R.N."/>
            <person name="Bailey T.L."/>
            <person name="Bansal M."/>
            <person name="Baxter L."/>
            <person name="Beisel K.W."/>
            <person name="Bersano T."/>
            <person name="Bono H."/>
            <person name="Chalk A.M."/>
            <person name="Chiu K.P."/>
            <person name="Choudhary V."/>
            <person name="Christoffels A."/>
            <person name="Clutterbuck D.R."/>
            <person name="Crowe M.L."/>
            <person name="Dalla E."/>
            <person name="Dalrymple B.P."/>
            <person name="de Bono B."/>
            <person name="Della Gatta G."/>
            <person name="di Bernardo D."/>
            <person name="Down T."/>
            <person name="Engstrom P."/>
            <person name="Fagiolini M."/>
            <person name="Faulkner G."/>
            <person name="Fletcher C.F."/>
            <person name="Fukushima T."/>
            <person name="Furuno M."/>
            <person name="Futaki S."/>
            <person name="Gariboldi M."/>
            <person name="Georgii-Hemming P."/>
            <person name="Gingeras T.R."/>
            <person name="Gojobori T."/>
            <person name="Green R.E."/>
            <person name="Gustincich S."/>
            <person name="Harbers M."/>
            <person name="Hayashi Y."/>
            <person name="Hensch T.K."/>
            <person name="Hirokawa N."/>
            <person name="Hill D."/>
            <person name="Huminiecki L."/>
            <person name="Iacono M."/>
            <person name="Ikeo K."/>
            <person name="Iwama A."/>
            <person name="Ishikawa T."/>
            <person name="Jakt M."/>
            <person name="Kanapin A."/>
            <person name="Katoh M."/>
            <person name="Kawasawa Y."/>
            <person name="Kelso J."/>
            <person name="Kitamura H."/>
            <person name="Kitano H."/>
            <person name="Kollias G."/>
            <person name="Krishnan S.P."/>
            <person name="Kruger A."/>
            <person name="Kummerfeld S.K."/>
            <person name="Kurochkin I.V."/>
            <person name="Lareau L.F."/>
            <person name="Lazarevic D."/>
            <person name="Lipovich L."/>
            <person name="Liu J."/>
            <person name="Liuni S."/>
            <person name="McWilliam S."/>
            <person name="Madan Babu M."/>
            <person name="Madera M."/>
            <person name="Marchionni L."/>
            <person name="Matsuda H."/>
            <person name="Matsuzawa S."/>
            <person name="Miki H."/>
            <person name="Mignone F."/>
            <person name="Miyake S."/>
            <person name="Morris K."/>
            <person name="Mottagui-Tabar S."/>
            <person name="Mulder N."/>
            <person name="Nakano N."/>
            <person name="Nakauchi H."/>
            <person name="Ng P."/>
            <person name="Nilsson R."/>
            <person name="Nishiguchi S."/>
            <person name="Nishikawa S."/>
            <person name="Nori F."/>
            <person name="Ohara O."/>
            <person name="Okazaki Y."/>
            <person name="Orlando V."/>
            <person name="Pang K.C."/>
            <person name="Pavan W.J."/>
            <person name="Pavesi G."/>
            <person name="Pesole G."/>
            <person name="Petrovsky N."/>
            <person name="Piazza S."/>
            <person name="Reed J."/>
            <person name="Reid J.F."/>
            <person name="Ring B.Z."/>
            <person name="Ringwald M."/>
            <person name="Rost B."/>
            <person name="Ruan Y."/>
            <person name="Salzberg S.L."/>
            <person name="Sandelin A."/>
            <person name="Schneider C."/>
            <person name="Schoenbach C."/>
            <person name="Sekiguchi K."/>
            <person name="Semple C.A."/>
            <person name="Seno S."/>
            <person name="Sessa L."/>
            <person name="Sheng Y."/>
            <person name="Shibata Y."/>
            <person name="Shimada H."/>
            <person name="Shimada K."/>
            <person name="Silva D."/>
            <person name="Sinclair B."/>
            <person name="Sperling S."/>
            <person name="Stupka E."/>
            <person name="Sugiura K."/>
            <person name="Sultana R."/>
            <person name="Takenaka Y."/>
            <person name="Taki K."/>
            <person name="Tammoja K."/>
            <person name="Tan S.L."/>
            <person name="Tang S."/>
            <person name="Taylor M.S."/>
            <person name="Tegner J."/>
            <person name="Teichmann S.A."/>
            <person name="Ueda H.R."/>
            <person name="van Nimwegen E."/>
            <person name="Verardo R."/>
            <person name="Wei C.L."/>
            <person name="Yagi K."/>
            <person name="Yamanishi H."/>
            <person name="Zabarovsky E."/>
            <person name="Zhu S."/>
            <person name="Zimmer A."/>
            <person name="Hide W."/>
            <person name="Bult C."/>
            <person name="Grimmond S.M."/>
            <person name="Teasdale R.D."/>
            <person name="Liu E.T."/>
            <person name="Brusic V."/>
            <person name="Quackenbush J."/>
            <person name="Wahlestedt C."/>
            <person name="Mattick J.S."/>
            <person name="Hume D.A."/>
            <person name="Kai C."/>
            <person name="Sasaki D."/>
            <person name="Tomaru Y."/>
            <person name="Fukuda S."/>
            <person name="Kanamori-Katayama M."/>
            <person name="Suzuki M."/>
            <person name="Aoki J."/>
            <person name="Arakawa T."/>
            <person name="Iida J."/>
            <person name="Imamura K."/>
            <person name="Itoh M."/>
            <person name="Kato T."/>
            <person name="Kawaji H."/>
            <person name="Kawagashira N."/>
            <person name="Kawashima T."/>
            <person name="Kojima M."/>
            <person name="Kondo S."/>
            <person name="Konno H."/>
            <person name="Nakano K."/>
            <person name="Ninomiya N."/>
            <person name="Nishio T."/>
            <person name="Okada M."/>
            <person name="Plessy C."/>
            <person name="Shibata K."/>
            <person name="Shiraki T."/>
            <person name="Suzuki S."/>
            <person name="Tagami M."/>
            <person name="Waki K."/>
            <person name="Watahiki A."/>
            <person name="Okamura-Oho Y."/>
            <person name="Suzuki H."/>
            <person name="Kawai J."/>
            <person name="Hayashizaki Y."/>
        </authorList>
    </citation>
    <scope>NUCLEOTIDE SEQUENCE [LARGE SCALE MRNA]</scope>
    <source>
        <strain>C57BL/6J</strain>
        <tissue>Kidney</tissue>
        <tissue>Lung</tissue>
    </source>
</reference>
<reference key="2">
    <citation type="journal article" date="2004" name="Genome Res.">
        <title>The status, quality, and expansion of the NIH full-length cDNA project: the Mammalian Gene Collection (MGC).</title>
        <authorList>
            <consortium name="The MGC Project Team"/>
        </authorList>
    </citation>
    <scope>NUCLEOTIDE SEQUENCE [LARGE SCALE MRNA]</scope>
    <source>
        <tissue>Embryo</tissue>
    </source>
</reference>
<reference key="3">
    <citation type="journal article" date="2005" name="Mol. Cell. Biol.">
        <title>A novel SR-related protein is required for the second step of pre-mRNA splicing.</title>
        <authorList>
            <person name="Cazalla D."/>
            <person name="Newton K."/>
            <person name="Caceres J.F."/>
        </authorList>
    </citation>
    <scope>PHOSPHORYLATION</scope>
    <scope>SUBCELLULAR LOCATION</scope>
    <scope>NUCLEOCYTOPLASMIC SHUTTLING</scope>
</reference>
<organism>
    <name type="scientific">Mus musculus</name>
    <name type="common">Mouse</name>
    <dbReference type="NCBI Taxonomy" id="10090"/>
    <lineage>
        <taxon>Eukaryota</taxon>
        <taxon>Metazoa</taxon>
        <taxon>Chordata</taxon>
        <taxon>Craniata</taxon>
        <taxon>Vertebrata</taxon>
        <taxon>Euteleostomi</taxon>
        <taxon>Mammalia</taxon>
        <taxon>Eutheria</taxon>
        <taxon>Euarchontoglires</taxon>
        <taxon>Glires</taxon>
        <taxon>Rodentia</taxon>
        <taxon>Myomorpha</taxon>
        <taxon>Muroidea</taxon>
        <taxon>Muridae</taxon>
        <taxon>Murinae</taxon>
        <taxon>Mus</taxon>
        <taxon>Mus</taxon>
    </lineage>
</organism>